<protein>
    <recommendedName>
        <fullName evidence="1">ATP synthase subunit beta, chloroplastic</fullName>
        <ecNumber evidence="1">7.1.2.2</ecNumber>
    </recommendedName>
    <alternativeName>
        <fullName evidence="1">ATP synthase F1 sector subunit beta</fullName>
    </alternativeName>
    <alternativeName>
        <fullName evidence="1">F-ATPase subunit beta</fullName>
    </alternativeName>
</protein>
<comment type="function">
    <text evidence="1">Produces ATP from ADP in the presence of a proton gradient across the membrane. The catalytic sites are hosted primarily by the beta subunits.</text>
</comment>
<comment type="catalytic activity">
    <reaction evidence="1">
        <text>ATP + H2O + 4 H(+)(in) = ADP + phosphate + 5 H(+)(out)</text>
        <dbReference type="Rhea" id="RHEA:57720"/>
        <dbReference type="ChEBI" id="CHEBI:15377"/>
        <dbReference type="ChEBI" id="CHEBI:15378"/>
        <dbReference type="ChEBI" id="CHEBI:30616"/>
        <dbReference type="ChEBI" id="CHEBI:43474"/>
        <dbReference type="ChEBI" id="CHEBI:456216"/>
        <dbReference type="EC" id="7.1.2.2"/>
    </reaction>
</comment>
<comment type="subunit">
    <text evidence="1">F-type ATPases have 2 components, CF(1) - the catalytic core - and CF(0) - the membrane proton channel. CF(1) has five subunits: alpha(3), beta(3), gamma(1), delta(1), epsilon(1). CF(0) has four main subunits: a(1), b(1), b'(1) and c(9-12).</text>
</comment>
<comment type="subcellular location">
    <subcellularLocation>
        <location evidence="1">Plastid</location>
        <location evidence="1">Chloroplast thylakoid membrane</location>
        <topology evidence="1">Peripheral membrane protein</topology>
    </subcellularLocation>
</comment>
<comment type="similarity">
    <text evidence="1">Belongs to the ATPase alpha/beta chains family.</text>
</comment>
<sequence>MRINPTTSGPGVSTLEKKNLGRISQIIGPVLDVAFPPGKMPNIYNALVVKGRDTIGQEINVTCEVQQLLGNNRVRAVAMSATDGLMRGMEVIDTGAPLSVPVGGATLGRIFNVLGEPVDDLGPVDTRTTSPIHRSAPAFIQLDTKLSIFETGIKVVDLLAPYRRGGKIGLFGGAGVGKTVLIMELINNIAKAHGGVSVFGGVGERTREGNDLYMEMKESGVINEQNIAESKVALVYGQMNEPPGARMRVGLTALTMAEYFRDVNEQDVLLFIDNIFRFVQAGSEVSALLGRMPSAVGYQPTLSTEMGTLQERITSTKEGSITSIQAVYVPADDLTDPAPATTFAHLDATTVLSRGLAAKGIYPAVDPLDSTSTMLQPRIVGEEHYETAQRVKQTLQRYKELQDIIAILGLDELSEEDRLTVARARKIERFLSQPFFVAEVFTGSPGKYVGLAETIRGFKLILSGELDGLPEQAFYLVGNIDEATAKATNLEMESKLKK</sequence>
<organism>
    <name type="scientific">Eucalyptus globulus subsp. globulus</name>
    <name type="common">Tasmanian blue gum</name>
    <dbReference type="NCBI Taxonomy" id="71271"/>
    <lineage>
        <taxon>Eukaryota</taxon>
        <taxon>Viridiplantae</taxon>
        <taxon>Streptophyta</taxon>
        <taxon>Embryophyta</taxon>
        <taxon>Tracheophyta</taxon>
        <taxon>Spermatophyta</taxon>
        <taxon>Magnoliopsida</taxon>
        <taxon>eudicotyledons</taxon>
        <taxon>Gunneridae</taxon>
        <taxon>Pentapetalae</taxon>
        <taxon>rosids</taxon>
        <taxon>malvids</taxon>
        <taxon>Myrtales</taxon>
        <taxon>Myrtaceae</taxon>
        <taxon>Myrtoideae</taxon>
        <taxon>Eucalypteae</taxon>
        <taxon>Eucalyptus</taxon>
    </lineage>
</organism>
<gene>
    <name evidence="1" type="primary">atpB</name>
</gene>
<dbReference type="EC" id="7.1.2.2" evidence="1"/>
<dbReference type="EMBL" id="AY780259">
    <property type="protein sequence ID" value="AAX21036.1"/>
    <property type="molecule type" value="Genomic_DNA"/>
</dbReference>
<dbReference type="RefSeq" id="YP_636306.1">
    <property type="nucleotide sequence ID" value="NC_008115.1"/>
</dbReference>
<dbReference type="SMR" id="Q49KZ1"/>
<dbReference type="GeneID" id="4108459"/>
<dbReference type="GO" id="GO:0009535">
    <property type="term" value="C:chloroplast thylakoid membrane"/>
    <property type="evidence" value="ECO:0007669"/>
    <property type="project" value="UniProtKB-SubCell"/>
</dbReference>
<dbReference type="GO" id="GO:0005739">
    <property type="term" value="C:mitochondrion"/>
    <property type="evidence" value="ECO:0007669"/>
    <property type="project" value="GOC"/>
</dbReference>
<dbReference type="GO" id="GO:0045259">
    <property type="term" value="C:proton-transporting ATP synthase complex"/>
    <property type="evidence" value="ECO:0007669"/>
    <property type="project" value="UniProtKB-KW"/>
</dbReference>
<dbReference type="GO" id="GO:0005524">
    <property type="term" value="F:ATP binding"/>
    <property type="evidence" value="ECO:0007669"/>
    <property type="project" value="UniProtKB-UniRule"/>
</dbReference>
<dbReference type="GO" id="GO:0016887">
    <property type="term" value="F:ATP hydrolysis activity"/>
    <property type="evidence" value="ECO:0007669"/>
    <property type="project" value="InterPro"/>
</dbReference>
<dbReference type="GO" id="GO:0046933">
    <property type="term" value="F:proton-transporting ATP synthase activity, rotational mechanism"/>
    <property type="evidence" value="ECO:0007669"/>
    <property type="project" value="UniProtKB-UniRule"/>
</dbReference>
<dbReference type="GO" id="GO:0042776">
    <property type="term" value="P:proton motive force-driven mitochondrial ATP synthesis"/>
    <property type="evidence" value="ECO:0007669"/>
    <property type="project" value="TreeGrafter"/>
</dbReference>
<dbReference type="CDD" id="cd18110">
    <property type="entry name" value="ATP-synt_F1_beta_C"/>
    <property type="match status" value="1"/>
</dbReference>
<dbReference type="CDD" id="cd18115">
    <property type="entry name" value="ATP-synt_F1_beta_N"/>
    <property type="match status" value="1"/>
</dbReference>
<dbReference type="CDD" id="cd01133">
    <property type="entry name" value="F1-ATPase_beta_CD"/>
    <property type="match status" value="1"/>
</dbReference>
<dbReference type="FunFam" id="1.10.1140.10:FF:000001">
    <property type="entry name" value="ATP synthase subunit beta"/>
    <property type="match status" value="1"/>
</dbReference>
<dbReference type="FunFam" id="3.40.50.300:FF:000026">
    <property type="entry name" value="ATP synthase subunit beta"/>
    <property type="match status" value="1"/>
</dbReference>
<dbReference type="FunFam" id="2.40.10.170:FF:000002">
    <property type="entry name" value="ATP synthase subunit beta, chloroplastic"/>
    <property type="match status" value="1"/>
</dbReference>
<dbReference type="Gene3D" id="2.40.10.170">
    <property type="match status" value="1"/>
</dbReference>
<dbReference type="Gene3D" id="1.10.1140.10">
    <property type="entry name" value="Bovine Mitochondrial F1-atpase, Atp Synthase Beta Chain, Chain D, domain 3"/>
    <property type="match status" value="1"/>
</dbReference>
<dbReference type="Gene3D" id="3.40.50.300">
    <property type="entry name" value="P-loop containing nucleotide triphosphate hydrolases"/>
    <property type="match status" value="1"/>
</dbReference>
<dbReference type="HAMAP" id="MF_01347">
    <property type="entry name" value="ATP_synth_beta_bact"/>
    <property type="match status" value="1"/>
</dbReference>
<dbReference type="InterPro" id="IPR003593">
    <property type="entry name" value="AAA+_ATPase"/>
</dbReference>
<dbReference type="InterPro" id="IPR055190">
    <property type="entry name" value="ATP-synt_VA_C"/>
</dbReference>
<dbReference type="InterPro" id="IPR005722">
    <property type="entry name" value="ATP_synth_F1_bsu"/>
</dbReference>
<dbReference type="InterPro" id="IPR020003">
    <property type="entry name" value="ATPase_a/bsu_AS"/>
</dbReference>
<dbReference type="InterPro" id="IPR050053">
    <property type="entry name" value="ATPase_alpha/beta_chains"/>
</dbReference>
<dbReference type="InterPro" id="IPR004100">
    <property type="entry name" value="ATPase_F1/V1/A1_a/bsu_N"/>
</dbReference>
<dbReference type="InterPro" id="IPR036121">
    <property type="entry name" value="ATPase_F1/V1/A1_a/bsu_N_sf"/>
</dbReference>
<dbReference type="InterPro" id="IPR000194">
    <property type="entry name" value="ATPase_F1/V1/A1_a/bsu_nucl-bd"/>
</dbReference>
<dbReference type="InterPro" id="IPR024034">
    <property type="entry name" value="ATPase_F1/V1_b/a_C"/>
</dbReference>
<dbReference type="InterPro" id="IPR027417">
    <property type="entry name" value="P-loop_NTPase"/>
</dbReference>
<dbReference type="NCBIfam" id="TIGR01039">
    <property type="entry name" value="atpD"/>
    <property type="match status" value="1"/>
</dbReference>
<dbReference type="PANTHER" id="PTHR15184">
    <property type="entry name" value="ATP SYNTHASE"/>
    <property type="match status" value="1"/>
</dbReference>
<dbReference type="PANTHER" id="PTHR15184:SF71">
    <property type="entry name" value="ATP SYNTHASE SUBUNIT BETA, MITOCHONDRIAL"/>
    <property type="match status" value="1"/>
</dbReference>
<dbReference type="Pfam" id="PF00006">
    <property type="entry name" value="ATP-synt_ab"/>
    <property type="match status" value="1"/>
</dbReference>
<dbReference type="Pfam" id="PF02874">
    <property type="entry name" value="ATP-synt_ab_N"/>
    <property type="match status" value="1"/>
</dbReference>
<dbReference type="Pfam" id="PF22919">
    <property type="entry name" value="ATP-synt_VA_C"/>
    <property type="match status" value="1"/>
</dbReference>
<dbReference type="SMART" id="SM00382">
    <property type="entry name" value="AAA"/>
    <property type="match status" value="1"/>
</dbReference>
<dbReference type="SUPFAM" id="SSF47917">
    <property type="entry name" value="C-terminal domain of alpha and beta subunits of F1 ATP synthase"/>
    <property type="match status" value="1"/>
</dbReference>
<dbReference type="SUPFAM" id="SSF50615">
    <property type="entry name" value="N-terminal domain of alpha and beta subunits of F1 ATP synthase"/>
    <property type="match status" value="1"/>
</dbReference>
<dbReference type="SUPFAM" id="SSF52540">
    <property type="entry name" value="P-loop containing nucleoside triphosphate hydrolases"/>
    <property type="match status" value="1"/>
</dbReference>
<dbReference type="PROSITE" id="PS00152">
    <property type="entry name" value="ATPASE_ALPHA_BETA"/>
    <property type="match status" value="1"/>
</dbReference>
<feature type="chain" id="PRO_0000254474" description="ATP synthase subunit beta, chloroplastic">
    <location>
        <begin position="1"/>
        <end position="498"/>
    </location>
</feature>
<feature type="binding site" evidence="1">
    <location>
        <begin position="172"/>
        <end position="179"/>
    </location>
    <ligand>
        <name>ATP</name>
        <dbReference type="ChEBI" id="CHEBI:30616"/>
    </ligand>
</feature>
<keyword id="KW-0066">ATP synthesis</keyword>
<keyword id="KW-0067">ATP-binding</keyword>
<keyword id="KW-0139">CF(1)</keyword>
<keyword id="KW-0150">Chloroplast</keyword>
<keyword id="KW-0375">Hydrogen ion transport</keyword>
<keyword id="KW-0406">Ion transport</keyword>
<keyword id="KW-0472">Membrane</keyword>
<keyword id="KW-0547">Nucleotide-binding</keyword>
<keyword id="KW-0934">Plastid</keyword>
<keyword id="KW-0793">Thylakoid</keyword>
<keyword id="KW-1278">Translocase</keyword>
<keyword id="KW-0813">Transport</keyword>
<evidence type="ECO:0000255" key="1">
    <source>
        <dbReference type="HAMAP-Rule" id="MF_01347"/>
    </source>
</evidence>
<accession>Q49KZ1</accession>
<reference key="1">
    <citation type="journal article" date="2005" name="DNA Res.">
        <title>Complete nucleotide sequence of the chloroplast genome from the Tasmanian blue gum, Eucalyptus globulus (Myrtaceae).</title>
        <authorList>
            <person name="Steane D.A."/>
        </authorList>
    </citation>
    <scope>NUCLEOTIDE SEQUENCE [LARGE SCALE GENOMIC DNA]</scope>
</reference>
<proteinExistence type="inferred from homology"/>
<name>ATPB_EUCGG</name>
<geneLocation type="chloroplast"/>